<evidence type="ECO:0000255" key="1">
    <source>
        <dbReference type="HAMAP-Rule" id="MF_01309"/>
    </source>
</evidence>
<evidence type="ECO:0000256" key="2">
    <source>
        <dbReference type="SAM" id="MobiDB-lite"/>
    </source>
</evidence>
<evidence type="ECO:0000305" key="3"/>
<comment type="function">
    <text evidence="1">Binds the lower part of the 30S subunit head. Binds mRNA in the 70S ribosome, positioning it for translation.</text>
</comment>
<comment type="subunit">
    <text evidence="1">Part of the 30S ribosomal subunit. Forms a tight complex with proteins S10 and S14.</text>
</comment>
<comment type="similarity">
    <text evidence="1">Belongs to the universal ribosomal protein uS3 family.</text>
</comment>
<protein>
    <recommendedName>
        <fullName evidence="1">Small ribosomal subunit protein uS3</fullName>
    </recommendedName>
    <alternativeName>
        <fullName evidence="3">30S ribosomal protein S3</fullName>
    </alternativeName>
</protein>
<reference key="1">
    <citation type="journal article" date="2007" name="J. Bacteriol.">
        <title>Complete genome sequence of Haemophilus somnus (Histophilus somni) strain 129Pt and comparison to Haemophilus ducreyi 35000HP and Haemophilus influenzae Rd.</title>
        <authorList>
            <person name="Challacombe J.F."/>
            <person name="Duncan A.J."/>
            <person name="Brettin T.S."/>
            <person name="Bruce D."/>
            <person name="Chertkov O."/>
            <person name="Detter J.C."/>
            <person name="Han C.S."/>
            <person name="Misra M."/>
            <person name="Richardson P."/>
            <person name="Tapia R."/>
            <person name="Thayer N."/>
            <person name="Xie G."/>
            <person name="Inzana T.J."/>
        </authorList>
    </citation>
    <scope>NUCLEOTIDE SEQUENCE [LARGE SCALE GENOMIC DNA]</scope>
    <source>
        <strain>129Pt</strain>
    </source>
</reference>
<name>RS3_HISS1</name>
<organism>
    <name type="scientific">Histophilus somni (strain 129Pt)</name>
    <name type="common">Haemophilus somnus</name>
    <dbReference type="NCBI Taxonomy" id="205914"/>
    <lineage>
        <taxon>Bacteria</taxon>
        <taxon>Pseudomonadati</taxon>
        <taxon>Pseudomonadota</taxon>
        <taxon>Gammaproteobacteria</taxon>
        <taxon>Pasteurellales</taxon>
        <taxon>Pasteurellaceae</taxon>
        <taxon>Histophilus</taxon>
    </lineage>
</organism>
<sequence>MGQKVHPHGIRLGIVKPWNSTWFANTQDFADNLDGDFKVRQFLNKELANASVSRITIERPAKSIRVTIHTARPGIVIGKKGEDVEKLRNAVAAIAGVPAQINIAEVKKPELDAKLVAGSIASQLERRVMFRRAMKKAVQNAMRLGAKGIKVEVSGRLGGAEIARSEWYREGRVPLHTLRADIDYNTSEAHTTYGVIGVKVWIFKGEILGGMAAIAQQPEQQPATPKKAPRGKGRK</sequence>
<gene>
    <name evidence="1" type="primary">rpsC</name>
    <name type="ordered locus">HS_0065</name>
</gene>
<feature type="chain" id="PRO_0000293799" description="Small ribosomal subunit protein uS3">
    <location>
        <begin position="1"/>
        <end position="235"/>
    </location>
</feature>
<feature type="domain" description="KH type-2" evidence="1">
    <location>
        <begin position="39"/>
        <end position="107"/>
    </location>
</feature>
<feature type="region of interest" description="Disordered" evidence="2">
    <location>
        <begin position="215"/>
        <end position="235"/>
    </location>
</feature>
<feature type="compositionally biased region" description="Low complexity" evidence="2">
    <location>
        <begin position="215"/>
        <end position="226"/>
    </location>
</feature>
<keyword id="KW-0687">Ribonucleoprotein</keyword>
<keyword id="KW-0689">Ribosomal protein</keyword>
<keyword id="KW-0694">RNA-binding</keyword>
<keyword id="KW-0699">rRNA-binding</keyword>
<accession>Q0I157</accession>
<dbReference type="EMBL" id="CP000436">
    <property type="protein sequence ID" value="ABI24346.1"/>
    <property type="molecule type" value="Genomic_DNA"/>
</dbReference>
<dbReference type="SMR" id="Q0I157"/>
<dbReference type="KEGG" id="hso:HS_0065"/>
<dbReference type="eggNOG" id="COG0092">
    <property type="taxonomic scope" value="Bacteria"/>
</dbReference>
<dbReference type="HOGENOM" id="CLU_058591_0_2_6"/>
<dbReference type="GO" id="GO:0022627">
    <property type="term" value="C:cytosolic small ribosomal subunit"/>
    <property type="evidence" value="ECO:0007669"/>
    <property type="project" value="TreeGrafter"/>
</dbReference>
<dbReference type="GO" id="GO:0003729">
    <property type="term" value="F:mRNA binding"/>
    <property type="evidence" value="ECO:0007669"/>
    <property type="project" value="UniProtKB-UniRule"/>
</dbReference>
<dbReference type="GO" id="GO:0019843">
    <property type="term" value="F:rRNA binding"/>
    <property type="evidence" value="ECO:0007669"/>
    <property type="project" value="UniProtKB-UniRule"/>
</dbReference>
<dbReference type="GO" id="GO:0003735">
    <property type="term" value="F:structural constituent of ribosome"/>
    <property type="evidence" value="ECO:0007669"/>
    <property type="project" value="InterPro"/>
</dbReference>
<dbReference type="GO" id="GO:0006412">
    <property type="term" value="P:translation"/>
    <property type="evidence" value="ECO:0007669"/>
    <property type="project" value="UniProtKB-UniRule"/>
</dbReference>
<dbReference type="CDD" id="cd02412">
    <property type="entry name" value="KH-II_30S_S3"/>
    <property type="match status" value="1"/>
</dbReference>
<dbReference type="FunFam" id="3.30.1140.32:FF:000001">
    <property type="entry name" value="30S ribosomal protein S3"/>
    <property type="match status" value="1"/>
</dbReference>
<dbReference type="FunFam" id="3.30.300.20:FF:000001">
    <property type="entry name" value="30S ribosomal protein S3"/>
    <property type="match status" value="1"/>
</dbReference>
<dbReference type="Gene3D" id="3.30.300.20">
    <property type="match status" value="1"/>
</dbReference>
<dbReference type="Gene3D" id="3.30.1140.32">
    <property type="entry name" value="Ribosomal protein S3, C-terminal domain"/>
    <property type="match status" value="1"/>
</dbReference>
<dbReference type="HAMAP" id="MF_01309_B">
    <property type="entry name" value="Ribosomal_uS3_B"/>
    <property type="match status" value="1"/>
</dbReference>
<dbReference type="InterPro" id="IPR004087">
    <property type="entry name" value="KH_dom"/>
</dbReference>
<dbReference type="InterPro" id="IPR015946">
    <property type="entry name" value="KH_dom-like_a/b"/>
</dbReference>
<dbReference type="InterPro" id="IPR004044">
    <property type="entry name" value="KH_dom_type_2"/>
</dbReference>
<dbReference type="InterPro" id="IPR009019">
    <property type="entry name" value="KH_sf_prok-type"/>
</dbReference>
<dbReference type="InterPro" id="IPR036419">
    <property type="entry name" value="Ribosomal_S3_C_sf"/>
</dbReference>
<dbReference type="InterPro" id="IPR005704">
    <property type="entry name" value="Ribosomal_uS3_bac-typ"/>
</dbReference>
<dbReference type="InterPro" id="IPR001351">
    <property type="entry name" value="Ribosomal_uS3_C"/>
</dbReference>
<dbReference type="InterPro" id="IPR018280">
    <property type="entry name" value="Ribosomal_uS3_CS"/>
</dbReference>
<dbReference type="NCBIfam" id="TIGR01009">
    <property type="entry name" value="rpsC_bact"/>
    <property type="match status" value="1"/>
</dbReference>
<dbReference type="PANTHER" id="PTHR11760">
    <property type="entry name" value="30S/40S RIBOSOMAL PROTEIN S3"/>
    <property type="match status" value="1"/>
</dbReference>
<dbReference type="PANTHER" id="PTHR11760:SF19">
    <property type="entry name" value="SMALL RIBOSOMAL SUBUNIT PROTEIN US3C"/>
    <property type="match status" value="1"/>
</dbReference>
<dbReference type="Pfam" id="PF07650">
    <property type="entry name" value="KH_2"/>
    <property type="match status" value="1"/>
</dbReference>
<dbReference type="Pfam" id="PF00189">
    <property type="entry name" value="Ribosomal_S3_C"/>
    <property type="match status" value="1"/>
</dbReference>
<dbReference type="SMART" id="SM00322">
    <property type="entry name" value="KH"/>
    <property type="match status" value="1"/>
</dbReference>
<dbReference type="SUPFAM" id="SSF54814">
    <property type="entry name" value="Prokaryotic type KH domain (KH-domain type II)"/>
    <property type="match status" value="1"/>
</dbReference>
<dbReference type="SUPFAM" id="SSF54821">
    <property type="entry name" value="Ribosomal protein S3 C-terminal domain"/>
    <property type="match status" value="1"/>
</dbReference>
<dbReference type="PROSITE" id="PS50823">
    <property type="entry name" value="KH_TYPE_2"/>
    <property type="match status" value="1"/>
</dbReference>
<dbReference type="PROSITE" id="PS00548">
    <property type="entry name" value="RIBOSOMAL_S3"/>
    <property type="match status" value="1"/>
</dbReference>
<proteinExistence type="inferred from homology"/>